<gene>
    <name type="primary">LALBA</name>
</gene>
<sequence>KQFTKCELSQVLKDMDGYGGIALP</sequence>
<accession>P37154</accession>
<dbReference type="PIR" id="C60525">
    <property type="entry name" value="C60525"/>
</dbReference>
<dbReference type="STRING" id="9685.ENSFCAP00000056431"/>
<dbReference type="PaxDb" id="9685-ENSFCAP00000010481"/>
<dbReference type="eggNOG" id="ENOG502T8BJ">
    <property type="taxonomic scope" value="Eukaryota"/>
</dbReference>
<dbReference type="InParanoid" id="P37154"/>
<dbReference type="TreeFam" id="TF324882"/>
<dbReference type="Proteomes" id="UP000011712">
    <property type="component" value="Unplaced"/>
</dbReference>
<dbReference type="GO" id="GO:0005576">
    <property type="term" value="C:extracellular region"/>
    <property type="evidence" value="ECO:0007669"/>
    <property type="project" value="UniProtKB-SubCell"/>
</dbReference>
<dbReference type="GO" id="GO:0005989">
    <property type="term" value="P:lactose biosynthetic process"/>
    <property type="evidence" value="ECO:0007669"/>
    <property type="project" value="UniProtKB-KW"/>
</dbReference>
<proteinExistence type="evidence at protein level"/>
<keyword id="KW-0106">Calcium</keyword>
<keyword id="KW-0903">Direct protein sequencing</keyword>
<keyword id="KW-0325">Glycoprotein</keyword>
<keyword id="KW-0422">Lactose biosynthesis</keyword>
<keyword id="KW-0494">Milk protein</keyword>
<keyword id="KW-1185">Reference proteome</keyword>
<keyword id="KW-0964">Secreted</keyword>
<reference key="1">
    <citation type="journal article" date="1990" name="Comp. Biochem. Physiol.">
        <title>Feline whey proteins: identification, isolation and initial characterization of alpha-lactalbumin, beta-lactoglobulin and lysozyme.</title>
        <authorList>
            <person name="Halliday J.A."/>
            <person name="Bell K."/>
            <person name="McKenzie H.A."/>
            <person name="Shaw D.C."/>
        </authorList>
    </citation>
    <scope>PROTEIN SEQUENCE</scope>
    <source>
        <tissue>Milk</tissue>
    </source>
</reference>
<name>LALBA_FELCA</name>
<organism>
    <name type="scientific">Felis catus</name>
    <name type="common">Cat</name>
    <name type="synonym">Felis silvestris catus</name>
    <dbReference type="NCBI Taxonomy" id="9685"/>
    <lineage>
        <taxon>Eukaryota</taxon>
        <taxon>Metazoa</taxon>
        <taxon>Chordata</taxon>
        <taxon>Craniata</taxon>
        <taxon>Vertebrata</taxon>
        <taxon>Euteleostomi</taxon>
        <taxon>Mammalia</taxon>
        <taxon>Eutheria</taxon>
        <taxon>Laurasiatheria</taxon>
        <taxon>Carnivora</taxon>
        <taxon>Feliformia</taxon>
        <taxon>Felidae</taxon>
        <taxon>Felinae</taxon>
        <taxon>Felis</taxon>
    </lineage>
</organism>
<comment type="function">
    <text>Regulatory subunit of lactose synthase, changes the substrate specificity of galactosyltransferase in the mammary gland making glucose a good acceptor substrate for this enzyme. This enables LS to synthesize lactose, the major carbohydrate component of milk. In other tissues, galactosyltransferase transfers galactose onto the N-acetylglucosamine of the oligosaccharide chains in glycoproteins.</text>
</comment>
<comment type="subunit">
    <text>Lactose synthase (LS) is a heterodimer of a catalytic component, beta1,4-galactosyltransferase (beta4Gal-T1) and a regulatory component, alpha-lactalbumin (LA).</text>
</comment>
<comment type="subcellular location">
    <subcellularLocation>
        <location>Secreted</location>
    </subcellularLocation>
</comment>
<comment type="tissue specificity">
    <text>Mammary gland specific. Secreted in milk.</text>
</comment>
<comment type="PTM">
    <text>Glycosylated (50% of the proteins).</text>
</comment>
<comment type="similarity">
    <text evidence="1">Belongs to the glycosyl hydrolase 22 family.</text>
</comment>
<feature type="chain" id="PRO_0000208835" description="Alpha-lactalbumin">
    <location>
        <begin position="1"/>
        <end position="24" status="greater than"/>
    </location>
</feature>
<feature type="non-terminal residue">
    <location>
        <position position="24"/>
    </location>
</feature>
<evidence type="ECO:0000305" key="1"/>
<protein>
    <recommendedName>
        <fullName>Alpha-lactalbumin</fullName>
    </recommendedName>
    <alternativeName>
        <fullName>Lactose synthase B protein</fullName>
    </alternativeName>
</protein>